<dbReference type="EMBL" id="M77236">
    <property type="protein sequence ID" value="AAA27194.1"/>
    <property type="molecule type" value="Genomic_DNA"/>
</dbReference>
<dbReference type="EMBL" id="AE006468">
    <property type="protein sequence ID" value="AAL20693.1"/>
    <property type="molecule type" value="Genomic_DNA"/>
</dbReference>
<dbReference type="EMBL" id="J04243">
    <property type="status" value="NOT_ANNOTATED_CDS"/>
    <property type="molecule type" value="Genomic_DNA"/>
</dbReference>
<dbReference type="PIR" id="S27731">
    <property type="entry name" value="S27731"/>
</dbReference>
<dbReference type="RefSeq" id="NP_460734.1">
    <property type="nucleotide sequence ID" value="NC_003197.2"/>
</dbReference>
<dbReference type="RefSeq" id="WP_000174484.1">
    <property type="nucleotide sequence ID" value="NC_003197.2"/>
</dbReference>
<dbReference type="SMR" id="P30752"/>
<dbReference type="STRING" id="99287.STM1778"/>
<dbReference type="PaxDb" id="99287-STM1778"/>
<dbReference type="GeneID" id="1253297"/>
<dbReference type="KEGG" id="stm:STM1778"/>
<dbReference type="PATRIC" id="fig|99287.12.peg.1874"/>
<dbReference type="HOGENOM" id="CLU_092816_1_1_6"/>
<dbReference type="OMA" id="FSSRFEW"/>
<dbReference type="PhylomeDB" id="P30752"/>
<dbReference type="BioCyc" id="SENT99287:STM1778-MONOMER"/>
<dbReference type="Proteomes" id="UP000001014">
    <property type="component" value="Chromosome"/>
</dbReference>
<dbReference type="GO" id="GO:0009279">
    <property type="term" value="C:cell outer membrane"/>
    <property type="evidence" value="ECO:0007669"/>
    <property type="project" value="UniProtKB-SubCell"/>
</dbReference>
<dbReference type="GO" id="GO:0044874">
    <property type="term" value="P:lipoprotein localization to outer membrane"/>
    <property type="evidence" value="ECO:0007669"/>
    <property type="project" value="UniProtKB-UniRule"/>
</dbReference>
<dbReference type="GO" id="GO:0015031">
    <property type="term" value="P:protein transport"/>
    <property type="evidence" value="ECO:0007669"/>
    <property type="project" value="UniProtKB-KW"/>
</dbReference>
<dbReference type="CDD" id="cd16326">
    <property type="entry name" value="LolB"/>
    <property type="match status" value="1"/>
</dbReference>
<dbReference type="FunFam" id="2.50.20.10:FF:000002">
    <property type="entry name" value="Outer-membrane lipoprotein LolB"/>
    <property type="match status" value="1"/>
</dbReference>
<dbReference type="Gene3D" id="2.50.20.10">
    <property type="entry name" value="Lipoprotein localisation LolA/LolB/LppX"/>
    <property type="match status" value="1"/>
</dbReference>
<dbReference type="HAMAP" id="MF_00233">
    <property type="entry name" value="LolB"/>
    <property type="match status" value="1"/>
</dbReference>
<dbReference type="InterPro" id="IPR029046">
    <property type="entry name" value="LolA/LolB/LppX"/>
</dbReference>
<dbReference type="InterPro" id="IPR004565">
    <property type="entry name" value="OM_lipoprot_LolB"/>
</dbReference>
<dbReference type="NCBIfam" id="TIGR00548">
    <property type="entry name" value="lolB"/>
    <property type="match status" value="1"/>
</dbReference>
<dbReference type="Pfam" id="PF03550">
    <property type="entry name" value="LolB"/>
    <property type="match status" value="1"/>
</dbReference>
<dbReference type="SUPFAM" id="SSF89392">
    <property type="entry name" value="Prokaryotic lipoproteins and lipoprotein localization factors"/>
    <property type="match status" value="1"/>
</dbReference>
<dbReference type="PROSITE" id="PS51257">
    <property type="entry name" value="PROKAR_LIPOPROTEIN"/>
    <property type="match status" value="1"/>
</dbReference>
<evidence type="ECO:0000250" key="1"/>
<evidence type="ECO:0000255" key="2"/>
<evidence type="ECO:0000305" key="3"/>
<feature type="signal peptide" evidence="2">
    <location>
        <begin position="1"/>
        <end position="21"/>
    </location>
</feature>
<feature type="chain" id="PRO_0000018311" description="Outer-membrane lipoprotein LolB">
    <location>
        <begin position="22"/>
        <end position="207"/>
    </location>
</feature>
<feature type="lipid moiety-binding region" description="N-palmitoyl cysteine" evidence="2">
    <location>
        <position position="22"/>
    </location>
</feature>
<feature type="lipid moiety-binding region" description="S-diacylglycerol cysteine" evidence="2">
    <location>
        <position position="22"/>
    </location>
</feature>
<gene>
    <name type="primary">lolB</name>
    <name type="synonym">hemM</name>
    <name type="ordered locus">STM1778</name>
</gene>
<protein>
    <recommendedName>
        <fullName>Outer-membrane lipoprotein LolB</fullName>
    </recommendedName>
</protein>
<organism>
    <name type="scientific">Salmonella typhimurium (strain LT2 / SGSC1412 / ATCC 700720)</name>
    <dbReference type="NCBI Taxonomy" id="99287"/>
    <lineage>
        <taxon>Bacteria</taxon>
        <taxon>Pseudomonadati</taxon>
        <taxon>Pseudomonadota</taxon>
        <taxon>Gammaproteobacteria</taxon>
        <taxon>Enterobacterales</taxon>
        <taxon>Enterobacteriaceae</taxon>
        <taxon>Salmonella</taxon>
    </lineage>
</organism>
<keyword id="KW-0998">Cell outer membrane</keyword>
<keyword id="KW-0143">Chaperone</keyword>
<keyword id="KW-0449">Lipoprotein</keyword>
<keyword id="KW-0472">Membrane</keyword>
<keyword id="KW-0564">Palmitate</keyword>
<keyword id="KW-0653">Protein transport</keyword>
<keyword id="KW-1185">Reference proteome</keyword>
<keyword id="KW-0732">Signal</keyword>
<keyword id="KW-0813">Transport</keyword>
<proteinExistence type="inferred from homology"/>
<sequence>MTLPDFRLIRLLPLASLVLTACTLPGHKGPGKSPDSPQWRQHQQEVRHLNQYQTRGAFAYISDDQKVYARFFWQQTGQDRYRLLLTNPLGSTELELNAQPGNVQLVDNKGQRYTADDAEEMIGKLTGMPIPLNSLRQWILGLPGDATDYKLDDQYRLSEVNYRQDGKNWKVVYGGYDSKTQPAMPANMELSDGSQRIKLKMDNWIVK</sequence>
<accession>P30752</accession>
<name>LOLB_SALTY</name>
<comment type="function">
    <text evidence="1">Plays a critical role in the incorporation of lipoproteins in the outer membrane after they are released by the LolA protein.</text>
</comment>
<comment type="subunit">
    <text evidence="1">Monomer.</text>
</comment>
<comment type="subcellular location">
    <subcellularLocation>
        <location evidence="1">Cell outer membrane</location>
        <topology evidence="1">Lipid-anchor</topology>
    </subcellularLocation>
</comment>
<comment type="similarity">
    <text evidence="3">Belongs to the LolB family.</text>
</comment>
<comment type="caution">
    <text evidence="3">Was originally thought to be involved in delta-aminolevulinic acid biosynthesis.</text>
</comment>
<reference key="1">
    <citation type="journal article" date="1993" name="J. Gen. Microbiol.">
        <title>Characterization of the hemA-prs region of the Escherichia coli and Salmonella typhimurium chromosomes: identification of two open reading frames and implications for prs expression.</title>
        <authorList>
            <person name="Post D.A."/>
            <person name="Hove-Jensen B."/>
            <person name="Switzer R.L."/>
        </authorList>
    </citation>
    <scope>NUCLEOTIDE SEQUENCE [GENOMIC DNA]</scope>
</reference>
<reference key="2">
    <citation type="journal article" date="2001" name="Nature">
        <title>Complete genome sequence of Salmonella enterica serovar Typhimurium LT2.</title>
        <authorList>
            <person name="McClelland M."/>
            <person name="Sanderson K.E."/>
            <person name="Spieth J."/>
            <person name="Clifton S.W."/>
            <person name="Latreille P."/>
            <person name="Courtney L."/>
            <person name="Porwollik S."/>
            <person name="Ali J."/>
            <person name="Dante M."/>
            <person name="Du F."/>
            <person name="Hou S."/>
            <person name="Layman D."/>
            <person name="Leonard S."/>
            <person name="Nguyen C."/>
            <person name="Scott K."/>
            <person name="Holmes A."/>
            <person name="Grewal N."/>
            <person name="Mulvaney E."/>
            <person name="Ryan E."/>
            <person name="Sun H."/>
            <person name="Florea L."/>
            <person name="Miller W."/>
            <person name="Stoneking T."/>
            <person name="Nhan M."/>
            <person name="Waterston R."/>
            <person name="Wilson R.K."/>
        </authorList>
    </citation>
    <scope>NUCLEOTIDE SEQUENCE [LARGE SCALE GENOMIC DNA]</scope>
    <source>
        <strain>LT2 / SGSC1412 / ATCC 700720</strain>
    </source>
</reference>
<reference key="3">
    <citation type="journal article" date="1989" name="J. Bacteriol.">
        <title>Cloning, genetic characterization, and nucleotide sequence of the hemA-prfA operon of Salmonella typhimurium.</title>
        <authorList>
            <person name="Elliott T."/>
        </authorList>
    </citation>
    <scope>NUCLEOTIDE SEQUENCE [GENOMIC DNA] OF 1-139</scope>
</reference>